<evidence type="ECO:0000255" key="1"/>
<evidence type="ECO:0000269" key="2">
    <source>
    </source>
</evidence>
<evidence type="ECO:0000269" key="3">
    <source>
    </source>
</evidence>
<evidence type="ECO:0000305" key="4"/>
<evidence type="ECO:0000305" key="5">
    <source>
    </source>
</evidence>
<evidence type="ECO:0000305" key="6">
    <source>
    </source>
</evidence>
<evidence type="ECO:0000305" key="7">
    <source>
    </source>
</evidence>
<evidence type="ECO:0007829" key="8">
    <source>
        <dbReference type="PDB" id="7VU0"/>
    </source>
</evidence>
<evidence type="ECO:0007829" key="9">
    <source>
        <dbReference type="PDB" id="7VU1"/>
    </source>
</evidence>
<reference key="1">
    <citation type="journal article" date="1996" name="DNA Res.">
        <title>A 718-kb DNA sequence of the Escherichia coli K-12 genome corresponding to the 12.7-28.0 min region on the linkage map.</title>
        <authorList>
            <person name="Oshima T."/>
            <person name="Aiba H."/>
            <person name="Baba T."/>
            <person name="Fujita K."/>
            <person name="Hayashi K."/>
            <person name="Honjo A."/>
            <person name="Ikemoto K."/>
            <person name="Inada T."/>
            <person name="Itoh T."/>
            <person name="Kajihara M."/>
            <person name="Kanai K."/>
            <person name="Kashimoto K."/>
            <person name="Kimura S."/>
            <person name="Kitagawa M."/>
            <person name="Makino K."/>
            <person name="Masuda S."/>
            <person name="Miki T."/>
            <person name="Mizobuchi K."/>
            <person name="Mori H."/>
            <person name="Motomura K."/>
            <person name="Nakamura Y."/>
            <person name="Nashimoto H."/>
            <person name="Nishio Y."/>
            <person name="Saito N."/>
            <person name="Sampei G."/>
            <person name="Seki Y."/>
            <person name="Tagami H."/>
            <person name="Takemoto K."/>
            <person name="Wada C."/>
            <person name="Yamamoto Y."/>
            <person name="Yano M."/>
            <person name="Horiuchi T."/>
        </authorList>
    </citation>
    <scope>NUCLEOTIDE SEQUENCE [LARGE SCALE GENOMIC DNA]</scope>
    <source>
        <strain>K12 / W3110 / ATCC 27325 / DSM 5911</strain>
    </source>
</reference>
<reference key="2">
    <citation type="journal article" date="1997" name="Science">
        <title>The complete genome sequence of Escherichia coli K-12.</title>
        <authorList>
            <person name="Blattner F.R."/>
            <person name="Plunkett G. III"/>
            <person name="Bloch C.A."/>
            <person name="Perna N.T."/>
            <person name="Burland V."/>
            <person name="Riley M."/>
            <person name="Collado-Vides J."/>
            <person name="Glasner J.D."/>
            <person name="Rode C.K."/>
            <person name="Mayhew G.F."/>
            <person name="Gregor J."/>
            <person name="Davis N.W."/>
            <person name="Kirkpatrick H.A."/>
            <person name="Goeden M.A."/>
            <person name="Rose D.J."/>
            <person name="Mau B."/>
            <person name="Shao Y."/>
        </authorList>
    </citation>
    <scope>NUCLEOTIDE SEQUENCE [LARGE SCALE GENOMIC DNA]</scope>
    <source>
        <strain>K12 / MG1655 / ATCC 47076</strain>
    </source>
</reference>
<reference key="3">
    <citation type="journal article" date="2006" name="Mol. Syst. Biol.">
        <title>Highly accurate genome sequences of Escherichia coli K-12 strains MG1655 and W3110.</title>
        <authorList>
            <person name="Hayashi K."/>
            <person name="Morooka N."/>
            <person name="Yamamoto Y."/>
            <person name="Fujita K."/>
            <person name="Isono K."/>
            <person name="Choi S."/>
            <person name="Ohtsubo E."/>
            <person name="Baba T."/>
            <person name="Wanner B.L."/>
            <person name="Mori H."/>
            <person name="Horiuchi T."/>
        </authorList>
    </citation>
    <scope>NUCLEOTIDE SEQUENCE [LARGE SCALE GENOMIC DNA]</scope>
    <source>
        <strain>K12 / W3110 / ATCC 27325 / DSM 5911</strain>
    </source>
</reference>
<reference key="4">
    <citation type="journal article" date="2002" name="Protein Sci.">
        <title>The beta-barrel finder (BBF) program, allowing identification of outer membrane beta-barrel proteins encoded within prokaryotic genomes.</title>
        <authorList>
            <person name="Zhai Y."/>
            <person name="Saier M.H. Jr."/>
        </authorList>
    </citation>
    <scope>SUBCELLULAR LOCATION</scope>
    <scope>SIMILARITY</scope>
</reference>
<reference key="5">
    <citation type="journal article" date="2006" name="J. Biol. Chem.">
        <title>Comparative genomics and experimental characterization of N-acetylglucosamine utilization pathway of Shewanella oneidensis.</title>
        <authorList>
            <person name="Yang C."/>
            <person name="Rodionov D.A."/>
            <person name="Li X."/>
            <person name="Laikova O.N."/>
            <person name="Gelfand M.S."/>
            <person name="Zagnitko O.P."/>
            <person name="Romine M.F."/>
            <person name="Obraztsova A.Y."/>
            <person name="Nealson K.H."/>
            <person name="Osterman A.L."/>
        </authorList>
    </citation>
    <scope>FUNCTION</scope>
    <scope>GENE NAME</scope>
</reference>
<reference key="6">
    <citation type="journal article" date="2009" name="Mol. Microbiol.">
        <title>A conserved small RNA promotes silencing of the outer membrane protein YbfM.</title>
        <authorList>
            <person name="Rasmussen A.A."/>
            <person name="Johansen J."/>
            <person name="Nielsen J.S."/>
            <person name="Overgaard M."/>
            <person name="Kallipolitis B."/>
            <person name="Valentin-Hansen P."/>
        </authorList>
    </citation>
    <scope>INDUCTION</scope>
    <source>
        <strain>K12</strain>
    </source>
</reference>
<reference key="7">
    <citation type="journal article" date="2009" name="Mol. Microbiol.">
        <title>Switching off small RNA regulation with trap-mRNA.</title>
        <authorList>
            <person name="Overgaard M."/>
            <person name="Johansen J."/>
            <person name="Moller-Jensen J."/>
            <person name="Valentin-Hansen P."/>
        </authorList>
    </citation>
    <scope>FUNCTION IN CHITOBIOSE UTILIZATION</scope>
    <scope>INDUCTION</scope>
    <source>
        <strain>K12</strain>
    </source>
</reference>
<dbReference type="EMBL" id="U00096">
    <property type="protein sequence ID" value="AAC73775.1"/>
    <property type="molecule type" value="Genomic_DNA"/>
</dbReference>
<dbReference type="EMBL" id="AP009048">
    <property type="protein sequence ID" value="BAA35329.2"/>
    <property type="molecule type" value="Genomic_DNA"/>
</dbReference>
<dbReference type="PIR" id="H64802">
    <property type="entry name" value="H64802"/>
</dbReference>
<dbReference type="RefSeq" id="NP_415207.1">
    <property type="nucleotide sequence ID" value="NC_000913.3"/>
</dbReference>
<dbReference type="RefSeq" id="WP_001258819.1">
    <property type="nucleotide sequence ID" value="NZ_SSZK01000045.1"/>
</dbReference>
<dbReference type="PDB" id="7VTZ">
    <property type="method" value="X-ray"/>
    <property type="resolution" value="2.10 A"/>
    <property type="chains" value="A=33-468"/>
</dbReference>
<dbReference type="PDB" id="7VU0">
    <property type="method" value="X-ray"/>
    <property type="resolution" value="1.85 A"/>
    <property type="chains" value="A/B=33-468"/>
</dbReference>
<dbReference type="PDB" id="7VU1">
    <property type="method" value="X-ray"/>
    <property type="resolution" value="1.90 A"/>
    <property type="chains" value="A/B=33-468"/>
</dbReference>
<dbReference type="PDBsum" id="7VTZ"/>
<dbReference type="PDBsum" id="7VU0"/>
<dbReference type="PDBsum" id="7VU1"/>
<dbReference type="SMR" id="P75733"/>
<dbReference type="BioGRID" id="4261649">
    <property type="interactions" value="315"/>
</dbReference>
<dbReference type="FunCoup" id="P75733">
    <property type="interactions" value="125"/>
</dbReference>
<dbReference type="STRING" id="511145.b0681"/>
<dbReference type="TCDB" id="1.B.25.1.13">
    <property type="family name" value="the outer membrane porin (opr) family"/>
</dbReference>
<dbReference type="PaxDb" id="511145-b0681"/>
<dbReference type="EnsemblBacteria" id="AAC73775">
    <property type="protein sequence ID" value="AAC73775"/>
    <property type="gene ID" value="b0681"/>
</dbReference>
<dbReference type="GeneID" id="945296"/>
<dbReference type="KEGG" id="ecj:JW0667"/>
<dbReference type="KEGG" id="eco:b0681"/>
<dbReference type="KEGG" id="ecoc:C3026_03385"/>
<dbReference type="PATRIC" id="fig|1411691.4.peg.1595"/>
<dbReference type="EchoBASE" id="EB3423"/>
<dbReference type="eggNOG" id="ENOG502Z7J2">
    <property type="taxonomic scope" value="Bacteria"/>
</dbReference>
<dbReference type="HOGENOM" id="CLU_045968_0_0_6"/>
<dbReference type="InParanoid" id="P75733"/>
<dbReference type="OMA" id="LHYTQYD"/>
<dbReference type="OrthoDB" id="5579297at2"/>
<dbReference type="PhylomeDB" id="P75733"/>
<dbReference type="BioCyc" id="EcoCyc:G6370-MONOMER"/>
<dbReference type="BioCyc" id="MetaCyc:G6370-MONOMER"/>
<dbReference type="PRO" id="PR:P75733"/>
<dbReference type="Proteomes" id="UP000000625">
    <property type="component" value="Chromosome"/>
</dbReference>
<dbReference type="GO" id="GO:0009279">
    <property type="term" value="C:cell outer membrane"/>
    <property type="evidence" value="ECO:0007669"/>
    <property type="project" value="UniProtKB-SubCell"/>
</dbReference>
<dbReference type="GO" id="GO:0046930">
    <property type="term" value="C:pore complex"/>
    <property type="evidence" value="ECO:0007669"/>
    <property type="project" value="UniProtKB-KW"/>
</dbReference>
<dbReference type="GO" id="GO:0015267">
    <property type="term" value="F:channel activity"/>
    <property type="evidence" value="ECO:0000314"/>
    <property type="project" value="EcoCyc"/>
</dbReference>
<dbReference type="GO" id="GO:0015288">
    <property type="term" value="F:porin activity"/>
    <property type="evidence" value="ECO:0000318"/>
    <property type="project" value="GO_Central"/>
</dbReference>
<dbReference type="GO" id="GO:0052778">
    <property type="term" value="P:diacetylchitobiose metabolic process"/>
    <property type="evidence" value="ECO:0000270"/>
    <property type="project" value="EcoCyc"/>
</dbReference>
<dbReference type="GO" id="GO:0006811">
    <property type="term" value="P:monoatomic ion transport"/>
    <property type="evidence" value="ECO:0007669"/>
    <property type="project" value="UniProtKB-KW"/>
</dbReference>
<dbReference type="GO" id="GO:0015772">
    <property type="term" value="P:oligosaccharide transport"/>
    <property type="evidence" value="ECO:0000314"/>
    <property type="project" value="EcoCyc"/>
</dbReference>
<dbReference type="GO" id="GO:0015774">
    <property type="term" value="P:polysaccharide transport"/>
    <property type="evidence" value="ECO:0007669"/>
    <property type="project" value="UniProtKB-KW"/>
</dbReference>
<dbReference type="FunFam" id="2.40.160.10:FF:000007">
    <property type="entry name" value="Outer membrane protein"/>
    <property type="match status" value="1"/>
</dbReference>
<dbReference type="Gene3D" id="2.40.160.10">
    <property type="entry name" value="Porin"/>
    <property type="match status" value="1"/>
</dbReference>
<dbReference type="InterPro" id="IPR005318">
    <property type="entry name" value="OM_porin_bac"/>
</dbReference>
<dbReference type="InterPro" id="IPR023614">
    <property type="entry name" value="Porin_dom_sf"/>
</dbReference>
<dbReference type="NCBIfam" id="NF047822">
    <property type="entry name" value="ChporEntbacChiP"/>
    <property type="match status" value="1"/>
</dbReference>
<dbReference type="PANTHER" id="PTHR34596">
    <property type="entry name" value="CHITOPORIN"/>
    <property type="match status" value="1"/>
</dbReference>
<dbReference type="PANTHER" id="PTHR34596:SF2">
    <property type="entry name" value="CHITOPORIN"/>
    <property type="match status" value="1"/>
</dbReference>
<dbReference type="Pfam" id="PF03573">
    <property type="entry name" value="OprD"/>
    <property type="match status" value="1"/>
</dbReference>
<name>CHIP_ECOLI</name>
<protein>
    <recommendedName>
        <fullName>Chitoporin</fullName>
    </recommendedName>
    <alternativeName>
        <fullName>ChiP-III</fullName>
    </alternativeName>
</protein>
<accession>P75733</accession>
<comment type="function">
    <text evidence="6 7">Involved in the uptake of chitosugars.</text>
</comment>
<comment type="subcellular location">
    <subcellularLocation>
        <location evidence="5">Cell outer membrane</location>
        <topology evidence="5">Multi-pass membrane protein</topology>
    </subcellularLocation>
</comment>
<comment type="induction">
    <text evidence="2 3">In the absence of chitobiose, expression of chiPQ is silenced by the MicM small regulatory RNA (sRNA), which sequesters the ribosome binding site of the chiPQ mRNA by an antisense mechanism. In the presence of chitosugars, the chbBCARFG chitobiose operon is induced and acts as an RNA trap to degrade the constitutively expressed MicM, leading to the translation of chiPQ.</text>
</comment>
<comment type="similarity">
    <text evidence="4">Belongs to the outer membrane porin (Opr) (TC 1.B.25) family.</text>
</comment>
<feature type="signal peptide" evidence="1">
    <location>
        <begin position="1"/>
        <end position="32"/>
    </location>
</feature>
<feature type="chain" id="PRO_0000168697" description="Chitoporin">
    <location>
        <begin position="33"/>
        <end position="468"/>
    </location>
</feature>
<feature type="turn" evidence="8">
    <location>
        <begin position="35"/>
        <end position="38"/>
    </location>
</feature>
<feature type="strand" evidence="8">
    <location>
        <begin position="40"/>
        <end position="56"/>
    </location>
</feature>
<feature type="turn" evidence="9">
    <location>
        <begin position="57"/>
        <end position="61"/>
    </location>
</feature>
<feature type="strand" evidence="8">
    <location>
        <begin position="62"/>
        <end position="79"/>
    </location>
</feature>
<feature type="turn" evidence="8">
    <location>
        <begin position="84"/>
        <end position="86"/>
    </location>
</feature>
<feature type="strand" evidence="8">
    <location>
        <begin position="87"/>
        <end position="101"/>
    </location>
</feature>
<feature type="strand" evidence="8">
    <location>
        <begin position="110"/>
        <end position="118"/>
    </location>
</feature>
<feature type="helix" evidence="8">
    <location>
        <begin position="119"/>
        <end position="121"/>
    </location>
</feature>
<feature type="strand" evidence="8">
    <location>
        <begin position="130"/>
        <end position="142"/>
    </location>
</feature>
<feature type="strand" evidence="8">
    <location>
        <begin position="145"/>
        <end position="152"/>
    </location>
</feature>
<feature type="strand" evidence="8">
    <location>
        <begin position="156"/>
        <end position="161"/>
    </location>
</feature>
<feature type="strand" evidence="8">
    <location>
        <begin position="164"/>
        <end position="168"/>
    </location>
</feature>
<feature type="strand" evidence="8">
    <location>
        <begin position="170"/>
        <end position="181"/>
    </location>
</feature>
<feature type="helix" evidence="8">
    <location>
        <begin position="183"/>
        <end position="185"/>
    </location>
</feature>
<feature type="strand" evidence="8">
    <location>
        <begin position="187"/>
        <end position="199"/>
    </location>
</feature>
<feature type="strand" evidence="8">
    <location>
        <begin position="214"/>
        <end position="218"/>
    </location>
</feature>
<feature type="strand" evidence="8">
    <location>
        <begin position="221"/>
        <end position="229"/>
    </location>
</feature>
<feature type="strand" evidence="8">
    <location>
        <begin position="231"/>
        <end position="233"/>
    </location>
</feature>
<feature type="strand" evidence="8">
    <location>
        <begin position="235"/>
        <end position="243"/>
    </location>
</feature>
<feature type="turn" evidence="8">
    <location>
        <begin position="244"/>
        <end position="246"/>
    </location>
</feature>
<feature type="strand" evidence="8">
    <location>
        <begin position="247"/>
        <end position="260"/>
    </location>
</feature>
<feature type="strand" evidence="8">
    <location>
        <begin position="263"/>
        <end position="277"/>
    </location>
</feature>
<feature type="strand" evidence="8">
    <location>
        <begin position="280"/>
        <end position="282"/>
    </location>
</feature>
<feature type="strand" evidence="8">
    <location>
        <begin position="291"/>
        <end position="302"/>
    </location>
</feature>
<feature type="turn" evidence="8">
    <location>
        <begin position="303"/>
        <end position="305"/>
    </location>
</feature>
<feature type="strand" evidence="8">
    <location>
        <begin position="306"/>
        <end position="316"/>
    </location>
</feature>
<feature type="strand" evidence="8">
    <location>
        <begin position="319"/>
        <end position="321"/>
    </location>
</feature>
<feature type="strand" evidence="8">
    <location>
        <begin position="326"/>
        <end position="329"/>
    </location>
</feature>
<feature type="strand" evidence="9">
    <location>
        <begin position="345"/>
        <end position="347"/>
    </location>
</feature>
<feature type="strand" evidence="8">
    <location>
        <begin position="355"/>
        <end position="364"/>
    </location>
</feature>
<feature type="helix" evidence="8">
    <location>
        <begin position="366"/>
        <end position="368"/>
    </location>
</feature>
<feature type="strand" evidence="8">
    <location>
        <begin position="373"/>
        <end position="385"/>
    </location>
</feature>
<feature type="strand" evidence="8">
    <location>
        <begin position="404"/>
        <end position="416"/>
    </location>
</feature>
<feature type="turn" evidence="8">
    <location>
        <begin position="421"/>
        <end position="424"/>
    </location>
</feature>
<feature type="strand" evidence="8">
    <location>
        <begin position="426"/>
        <end position="438"/>
    </location>
</feature>
<feature type="strand" evidence="8">
    <location>
        <begin position="454"/>
        <end position="468"/>
    </location>
</feature>
<gene>
    <name type="primary">chiP</name>
    <name type="synonym">ybfM</name>
    <name type="ordered locus">b0681</name>
    <name type="ordered locus">JW0667</name>
</gene>
<keyword id="KW-0002">3D-structure</keyword>
<keyword id="KW-0998">Cell outer membrane</keyword>
<keyword id="KW-0406">Ion transport</keyword>
<keyword id="KW-0472">Membrane</keyword>
<keyword id="KW-0625">Polysaccharide transport</keyword>
<keyword id="KW-0626">Porin</keyword>
<keyword id="KW-1185">Reference proteome</keyword>
<keyword id="KW-0732">Signal</keyword>
<keyword id="KW-0762">Sugar transport</keyword>
<keyword id="KW-0812">Transmembrane</keyword>
<keyword id="KW-1134">Transmembrane beta strand</keyword>
<keyword id="KW-0813">Transport</keyword>
<sequence length="468" mass="52780">MRTFSGKRSTLALAIAGVTAMSGFMAMPEARAEGFIDDSTLTGGIYYWQRERDRKDVTDGDKYKTNLSHSTWNANLDFQSGYAADMFGLDIAAFTAIEMAENGDSSHPNEIAFSKSNKAYDEDWSGDKSGISLYKAAAKFKYGPVWARAGYIQPTGQTLLAPHWSFMPGTYQGAEAGANFDYGDAGALSFSYMWTNEYKAPWHLEMDEFYQNDKTTKVDYLHSFGAKYDFKNNFVLEAAFGQAEGYIDQYFAKASYKFDIAGSPLTTSYQFYGTRDKVDDRSVNDLYDGTAWLQALTFGYRAADVVDLRLEGTWVKADGQQGYFLQRMTPTYASSNGRLDIWWDNRSDFNANGEKAVFFGAMYDLKNWNLPGFAIGASYVYAWDAKPATWQSNPDAYYDKNRTIEESAYSLDAVYTIQDGRAKGTMFKLHFTEYDNHSDIPSWGGGYGNIFQDERDVKFMVIAPFTIF</sequence>
<organism>
    <name type="scientific">Escherichia coli (strain K12)</name>
    <dbReference type="NCBI Taxonomy" id="83333"/>
    <lineage>
        <taxon>Bacteria</taxon>
        <taxon>Pseudomonadati</taxon>
        <taxon>Pseudomonadota</taxon>
        <taxon>Gammaproteobacteria</taxon>
        <taxon>Enterobacterales</taxon>
        <taxon>Enterobacteriaceae</taxon>
        <taxon>Escherichia</taxon>
    </lineage>
</organism>
<proteinExistence type="evidence at protein level"/>